<evidence type="ECO:0000255" key="1">
    <source>
        <dbReference type="HAMAP-Rule" id="MF_01636"/>
    </source>
</evidence>
<dbReference type="EC" id="4.1.1.98" evidence="1"/>
<dbReference type="EMBL" id="CP000961">
    <property type="protein sequence ID" value="ACA88696.1"/>
    <property type="molecule type" value="Genomic_DNA"/>
</dbReference>
<dbReference type="RefSeq" id="WP_012327022.1">
    <property type="nucleotide sequence ID" value="NC_010506.1"/>
</dbReference>
<dbReference type="SMR" id="B1KK65"/>
<dbReference type="STRING" id="392500.Swoo_4444"/>
<dbReference type="KEGG" id="swd:Swoo_4444"/>
<dbReference type="eggNOG" id="COG0043">
    <property type="taxonomic scope" value="Bacteria"/>
</dbReference>
<dbReference type="HOGENOM" id="CLU_023348_4_1_6"/>
<dbReference type="UniPathway" id="UPA00232"/>
<dbReference type="Proteomes" id="UP000002168">
    <property type="component" value="Chromosome"/>
</dbReference>
<dbReference type="GO" id="GO:0005829">
    <property type="term" value="C:cytosol"/>
    <property type="evidence" value="ECO:0007669"/>
    <property type="project" value="TreeGrafter"/>
</dbReference>
<dbReference type="GO" id="GO:0005886">
    <property type="term" value="C:plasma membrane"/>
    <property type="evidence" value="ECO:0007669"/>
    <property type="project" value="UniProtKB-SubCell"/>
</dbReference>
<dbReference type="GO" id="GO:0008694">
    <property type="term" value="F:3-octaprenyl-4-hydroxybenzoate carboxy-lyase activity"/>
    <property type="evidence" value="ECO:0007669"/>
    <property type="project" value="UniProtKB-UniRule"/>
</dbReference>
<dbReference type="GO" id="GO:0046872">
    <property type="term" value="F:metal ion binding"/>
    <property type="evidence" value="ECO:0007669"/>
    <property type="project" value="UniProtKB-KW"/>
</dbReference>
<dbReference type="GO" id="GO:0006744">
    <property type="term" value="P:ubiquinone biosynthetic process"/>
    <property type="evidence" value="ECO:0007669"/>
    <property type="project" value="UniProtKB-UniRule"/>
</dbReference>
<dbReference type="FunFam" id="1.20.5.570:FF:000001">
    <property type="entry name" value="3-octaprenyl-4-hydroxybenzoate carboxy-lyase"/>
    <property type="match status" value="1"/>
</dbReference>
<dbReference type="FunFam" id="3.40.1670.10:FF:000001">
    <property type="entry name" value="3-octaprenyl-4-hydroxybenzoate carboxy-lyase"/>
    <property type="match status" value="1"/>
</dbReference>
<dbReference type="Gene3D" id="1.20.5.570">
    <property type="entry name" value="Single helix bin"/>
    <property type="match status" value="1"/>
</dbReference>
<dbReference type="Gene3D" id="3.40.1670.10">
    <property type="entry name" value="UbiD C-terminal domain-like"/>
    <property type="match status" value="1"/>
</dbReference>
<dbReference type="HAMAP" id="MF_01636">
    <property type="entry name" value="UbiD"/>
    <property type="match status" value="1"/>
</dbReference>
<dbReference type="InterPro" id="IPR002830">
    <property type="entry name" value="UbiD"/>
</dbReference>
<dbReference type="InterPro" id="IPR049381">
    <property type="entry name" value="UbiD-like_C"/>
</dbReference>
<dbReference type="InterPro" id="IPR049383">
    <property type="entry name" value="UbiD-like_N"/>
</dbReference>
<dbReference type="InterPro" id="IPR023677">
    <property type="entry name" value="UbiD_bacteria"/>
</dbReference>
<dbReference type="InterPro" id="IPR048304">
    <property type="entry name" value="UbiD_Rift_dom"/>
</dbReference>
<dbReference type="NCBIfam" id="NF008175">
    <property type="entry name" value="PRK10922.1"/>
    <property type="match status" value="1"/>
</dbReference>
<dbReference type="NCBIfam" id="TIGR00148">
    <property type="entry name" value="UbiD family decarboxylase"/>
    <property type="match status" value="1"/>
</dbReference>
<dbReference type="PANTHER" id="PTHR30108">
    <property type="entry name" value="3-OCTAPRENYL-4-HYDROXYBENZOATE CARBOXY-LYASE-RELATED"/>
    <property type="match status" value="1"/>
</dbReference>
<dbReference type="PANTHER" id="PTHR30108:SF17">
    <property type="entry name" value="FERULIC ACID DECARBOXYLASE 1"/>
    <property type="match status" value="1"/>
</dbReference>
<dbReference type="Pfam" id="PF01977">
    <property type="entry name" value="UbiD"/>
    <property type="match status" value="1"/>
</dbReference>
<dbReference type="Pfam" id="PF20696">
    <property type="entry name" value="UbiD_C"/>
    <property type="match status" value="1"/>
</dbReference>
<dbReference type="Pfam" id="PF20695">
    <property type="entry name" value="UbiD_N"/>
    <property type="match status" value="1"/>
</dbReference>
<dbReference type="SUPFAM" id="SSF50475">
    <property type="entry name" value="FMN-binding split barrel"/>
    <property type="match status" value="1"/>
</dbReference>
<dbReference type="SUPFAM" id="SSF143968">
    <property type="entry name" value="UbiD C-terminal domain-like"/>
    <property type="match status" value="1"/>
</dbReference>
<sequence length="493" mass="55514">MSFKDLRSFIDHLESQGELKRISHPVDPNLEMTEIADRVLRAKGPALLFENPVGNDMPVLANLFGTPKRVAMALGKEDPLALREVGELLAFLKEPEPPRGFKDAIAKIPMFKQALNMPPKTVRNPPCQQVVKTGEEVDLTKLPIQHCWPGDVAPLVTWGLTITKGPRQKRQNLGIYRQQLLGRDKLIMRWLDHRGGALDFKDFKEKHPGERYPVVVALGSDPVTILGAVTPVPDSMSEYAFAGLLRGERTDVCKAISCDLEVPATSEIILEGYIDPDEMAEEGPYGDHTGYYNETDSFPVFTVTHITHRKDAIYHSTYTGRPPDEPAMLGVALNEVFVPILRKQYPEIIDFYLPPEGCSYRMAVISIRKQYPGHAKRVMMGAWSFLRQFMYTKFIVVVDEDVNCRDWNDVIWAITTRMDPKRDTVMIENTPIDYLDFASPVAGLGSKMGMDATNKWEGETDREWGTPIVMDQAVKDKVDQIWADLGIDDAPTL</sequence>
<comment type="function">
    <text evidence="1">Catalyzes the decarboxylation of 3-octaprenyl-4-hydroxy benzoate to 2-octaprenylphenol, an intermediate step in ubiquinone biosynthesis.</text>
</comment>
<comment type="catalytic activity">
    <reaction evidence="1">
        <text>a 4-hydroxy-3-(all-trans-polyprenyl)benzoate + H(+) = a 2-(all-trans-polyprenyl)phenol + CO2</text>
        <dbReference type="Rhea" id="RHEA:41680"/>
        <dbReference type="Rhea" id="RHEA-COMP:9514"/>
        <dbReference type="Rhea" id="RHEA-COMP:9516"/>
        <dbReference type="ChEBI" id="CHEBI:1269"/>
        <dbReference type="ChEBI" id="CHEBI:15378"/>
        <dbReference type="ChEBI" id="CHEBI:16526"/>
        <dbReference type="ChEBI" id="CHEBI:78396"/>
        <dbReference type="EC" id="4.1.1.98"/>
    </reaction>
</comment>
<comment type="cofactor">
    <cofactor evidence="1">
        <name>prenylated FMN</name>
        <dbReference type="ChEBI" id="CHEBI:87746"/>
    </cofactor>
    <text evidence="1">Binds 1 prenylated FMN per subunit.</text>
</comment>
<comment type="cofactor">
    <cofactor evidence="1">
        <name>Mn(2+)</name>
        <dbReference type="ChEBI" id="CHEBI:29035"/>
    </cofactor>
</comment>
<comment type="pathway">
    <text evidence="1">Cofactor biosynthesis; ubiquinone biosynthesis.</text>
</comment>
<comment type="subunit">
    <text evidence="1">Homohexamer.</text>
</comment>
<comment type="subcellular location">
    <subcellularLocation>
        <location evidence="1">Cell membrane</location>
        <topology evidence="1">Peripheral membrane protein</topology>
    </subcellularLocation>
</comment>
<comment type="similarity">
    <text evidence="1">Belongs to the UbiD family.</text>
</comment>
<name>UBID_SHEWM</name>
<protein>
    <recommendedName>
        <fullName evidence="1">3-octaprenyl-4-hydroxybenzoate carboxy-lyase</fullName>
        <ecNumber evidence="1">4.1.1.98</ecNumber>
    </recommendedName>
    <alternativeName>
        <fullName evidence="1">Polyprenyl p-hydroxybenzoate decarboxylase</fullName>
    </alternativeName>
</protein>
<keyword id="KW-1003">Cell membrane</keyword>
<keyword id="KW-0210">Decarboxylase</keyword>
<keyword id="KW-0285">Flavoprotein</keyword>
<keyword id="KW-0288">FMN</keyword>
<keyword id="KW-0456">Lyase</keyword>
<keyword id="KW-0464">Manganese</keyword>
<keyword id="KW-0472">Membrane</keyword>
<keyword id="KW-0479">Metal-binding</keyword>
<keyword id="KW-1185">Reference proteome</keyword>
<keyword id="KW-0831">Ubiquinone biosynthesis</keyword>
<gene>
    <name evidence="1" type="primary">ubiD</name>
    <name type="ordered locus">Swoo_4444</name>
</gene>
<organism>
    <name type="scientific">Shewanella woodyi (strain ATCC 51908 / MS32)</name>
    <dbReference type="NCBI Taxonomy" id="392500"/>
    <lineage>
        <taxon>Bacteria</taxon>
        <taxon>Pseudomonadati</taxon>
        <taxon>Pseudomonadota</taxon>
        <taxon>Gammaproteobacteria</taxon>
        <taxon>Alteromonadales</taxon>
        <taxon>Shewanellaceae</taxon>
        <taxon>Shewanella</taxon>
    </lineage>
</organism>
<proteinExistence type="inferred from homology"/>
<reference key="1">
    <citation type="submission" date="2008-02" db="EMBL/GenBank/DDBJ databases">
        <title>Complete sequence of Shewanella woodyi ATCC 51908.</title>
        <authorList>
            <consortium name="US DOE Joint Genome Institute"/>
            <person name="Copeland A."/>
            <person name="Lucas S."/>
            <person name="Lapidus A."/>
            <person name="Glavina del Rio T."/>
            <person name="Dalin E."/>
            <person name="Tice H."/>
            <person name="Bruce D."/>
            <person name="Goodwin L."/>
            <person name="Pitluck S."/>
            <person name="Sims D."/>
            <person name="Brettin T."/>
            <person name="Detter J.C."/>
            <person name="Han C."/>
            <person name="Kuske C.R."/>
            <person name="Schmutz J."/>
            <person name="Larimer F."/>
            <person name="Land M."/>
            <person name="Hauser L."/>
            <person name="Kyrpides N."/>
            <person name="Lykidis A."/>
            <person name="Zhao J.-S."/>
            <person name="Richardson P."/>
        </authorList>
    </citation>
    <scope>NUCLEOTIDE SEQUENCE [LARGE SCALE GENOMIC DNA]</scope>
    <source>
        <strain>ATCC 51908 / MS32</strain>
    </source>
</reference>
<accession>B1KK65</accession>
<feature type="chain" id="PRO_1000186724" description="3-octaprenyl-4-hydroxybenzoate carboxy-lyase">
    <location>
        <begin position="1"/>
        <end position="493"/>
    </location>
</feature>
<feature type="active site" description="Proton donor" evidence="1">
    <location>
        <position position="287"/>
    </location>
</feature>
<feature type="binding site" evidence="1">
    <location>
        <position position="172"/>
    </location>
    <ligand>
        <name>Mn(2+)</name>
        <dbReference type="ChEBI" id="CHEBI:29035"/>
    </ligand>
</feature>
<feature type="binding site" evidence="1">
    <location>
        <begin position="175"/>
        <end position="177"/>
    </location>
    <ligand>
        <name>prenylated FMN</name>
        <dbReference type="ChEBI" id="CHEBI:87746"/>
    </ligand>
</feature>
<feature type="binding site" evidence="1">
    <location>
        <begin position="189"/>
        <end position="191"/>
    </location>
    <ligand>
        <name>prenylated FMN</name>
        <dbReference type="ChEBI" id="CHEBI:87746"/>
    </ligand>
</feature>
<feature type="binding site" evidence="1">
    <location>
        <begin position="194"/>
        <end position="195"/>
    </location>
    <ligand>
        <name>prenylated FMN</name>
        <dbReference type="ChEBI" id="CHEBI:87746"/>
    </ligand>
</feature>
<feature type="binding site" evidence="1">
    <location>
        <position position="238"/>
    </location>
    <ligand>
        <name>Mn(2+)</name>
        <dbReference type="ChEBI" id="CHEBI:29035"/>
    </ligand>
</feature>